<comment type="function">
    <text evidence="1">Catalyzes the reduction of the double bond of an array of alpha,beta-unsaturated aldehydes and ketones. It also reduces the nitro group of nitroester and nitroaromatic compounds. It could have a role in detoxification processes.</text>
</comment>
<comment type="catalytic activity">
    <reaction evidence="1">
        <text>A + NADPH + H(+) = AH2 + NADP(+)</text>
        <dbReference type="Rhea" id="RHEA:13149"/>
        <dbReference type="ChEBI" id="CHEBI:13193"/>
        <dbReference type="ChEBI" id="CHEBI:15378"/>
        <dbReference type="ChEBI" id="CHEBI:17499"/>
        <dbReference type="ChEBI" id="CHEBI:57783"/>
        <dbReference type="ChEBI" id="CHEBI:58349"/>
        <dbReference type="EC" id="1.6.99.1"/>
    </reaction>
</comment>
<comment type="cofactor">
    <cofactor evidence="1">
        <name>FMN</name>
        <dbReference type="ChEBI" id="CHEBI:58210"/>
    </cofactor>
</comment>
<comment type="subunit">
    <text evidence="1">Homotetramer.</text>
</comment>
<comment type="similarity">
    <text evidence="1">Belongs to the NADH:flavin oxidoreductase/NADH oxidase family. NamA subfamily.</text>
</comment>
<proteinExistence type="inferred from homology"/>
<sequence length="345" mass="38462">MNSELFSPYTIKDVTLKNRIVMSPMCMYSSENEDGQVTNFHLVHYGTRAAGQVGLVMIEATAVLPEGRISNKDLGIWDDSLIEGLHKTTTFIHDNGAKAAIQLAHAGRKAELETDALAPSAIPFNETMKTPVEMSKHQIKDTILAFQQAAIRSKQAGFDVIEIHGAHGYLINEFLSPLSNKRTDEYGGSPENRYRFLREIIDSINEVWNGPLFVRISANDYHPDGLTVQDYVQYTKWMKEQGVDLIDCSSGAVVPARIDVYPGYQVQYAKHIKEHANIATGAVGLITTGAQAEQILNNNEADLIFIGRELLRNPYFPRIAANELGFELEEPHQYERAPGKISTNK</sequence>
<feature type="chain" id="PRO_0000216115" description="NADPH dehydrogenase">
    <location>
        <begin position="1"/>
        <end position="345"/>
    </location>
</feature>
<feature type="binding site" evidence="1">
    <location>
        <begin position="23"/>
        <end position="26"/>
    </location>
    <ligand>
        <name>FMN</name>
        <dbReference type="ChEBI" id="CHEBI:58210"/>
    </ligand>
</feature>
<feature type="binding site" evidence="1">
    <location>
        <position position="28"/>
    </location>
    <ligand>
        <name>substrate</name>
    </ligand>
</feature>
<feature type="binding site" evidence="1">
    <location>
        <position position="60"/>
    </location>
    <ligand>
        <name>FMN</name>
        <dbReference type="ChEBI" id="CHEBI:58210"/>
    </ligand>
</feature>
<feature type="binding site" evidence="1">
    <location>
        <position position="102"/>
    </location>
    <ligand>
        <name>FMN</name>
        <dbReference type="ChEBI" id="CHEBI:58210"/>
    </ligand>
</feature>
<feature type="binding site" evidence="1">
    <location>
        <begin position="164"/>
        <end position="167"/>
    </location>
    <ligand>
        <name>substrate</name>
    </ligand>
</feature>
<feature type="binding site" evidence="1">
    <location>
        <position position="215"/>
    </location>
    <ligand>
        <name>FMN</name>
        <dbReference type="ChEBI" id="CHEBI:58210"/>
    </ligand>
</feature>
<feature type="binding site" evidence="1">
    <location>
        <begin position="307"/>
        <end position="308"/>
    </location>
    <ligand>
        <name>FMN</name>
        <dbReference type="ChEBI" id="CHEBI:58210"/>
    </ligand>
</feature>
<dbReference type="EC" id="1.6.99.1" evidence="1"/>
<dbReference type="EMBL" id="CP000001">
    <property type="protein sequence ID" value="AAU18412.1"/>
    <property type="molecule type" value="Genomic_DNA"/>
</dbReference>
<dbReference type="RefSeq" id="WP_001083640.1">
    <property type="nucleotide sequence ID" value="NC_006274.1"/>
</dbReference>
<dbReference type="SMR" id="Q63CC9"/>
<dbReference type="KEGG" id="bcz:BCE33L1843"/>
<dbReference type="PATRIC" id="fig|288681.22.peg.3685"/>
<dbReference type="Proteomes" id="UP000002612">
    <property type="component" value="Chromosome"/>
</dbReference>
<dbReference type="GO" id="GO:0010181">
    <property type="term" value="F:FMN binding"/>
    <property type="evidence" value="ECO:0007669"/>
    <property type="project" value="UniProtKB-UniRule"/>
</dbReference>
<dbReference type="GO" id="GO:0050661">
    <property type="term" value="F:NADP binding"/>
    <property type="evidence" value="ECO:0007669"/>
    <property type="project" value="UniProtKB-UniRule"/>
</dbReference>
<dbReference type="GO" id="GO:0003959">
    <property type="term" value="F:NADPH dehydrogenase activity"/>
    <property type="evidence" value="ECO:0007669"/>
    <property type="project" value="UniProtKB-UniRule"/>
</dbReference>
<dbReference type="GO" id="GO:0009636">
    <property type="term" value="P:response to toxic substance"/>
    <property type="evidence" value="ECO:0007669"/>
    <property type="project" value="UniProtKB-KW"/>
</dbReference>
<dbReference type="CDD" id="cd02932">
    <property type="entry name" value="OYE_YqiM_FMN"/>
    <property type="match status" value="1"/>
</dbReference>
<dbReference type="Gene3D" id="3.20.20.70">
    <property type="entry name" value="Aldolase class I"/>
    <property type="match status" value="1"/>
</dbReference>
<dbReference type="HAMAP" id="MF_01614">
    <property type="entry name" value="NamA"/>
    <property type="match status" value="1"/>
</dbReference>
<dbReference type="InterPro" id="IPR013785">
    <property type="entry name" value="Aldolase_TIM"/>
</dbReference>
<dbReference type="InterPro" id="IPR023663">
    <property type="entry name" value="NADPH_DH_bac"/>
</dbReference>
<dbReference type="InterPro" id="IPR001155">
    <property type="entry name" value="OxRdtase_FMN_N"/>
</dbReference>
<dbReference type="InterPro" id="IPR044152">
    <property type="entry name" value="YqjM-like"/>
</dbReference>
<dbReference type="NCBIfam" id="NF010047">
    <property type="entry name" value="PRK13523.1"/>
    <property type="match status" value="1"/>
</dbReference>
<dbReference type="PANTHER" id="PTHR43303">
    <property type="entry name" value="NADPH DEHYDROGENASE C23G7.10C-RELATED"/>
    <property type="match status" value="1"/>
</dbReference>
<dbReference type="PANTHER" id="PTHR43303:SF4">
    <property type="entry name" value="NADPH DEHYDROGENASE C23G7.10C-RELATED"/>
    <property type="match status" value="1"/>
</dbReference>
<dbReference type="Pfam" id="PF00724">
    <property type="entry name" value="Oxidored_FMN"/>
    <property type="match status" value="1"/>
</dbReference>
<dbReference type="SUPFAM" id="SSF51395">
    <property type="entry name" value="FMN-linked oxidoreductases"/>
    <property type="match status" value="1"/>
</dbReference>
<name>NAMA_BACCZ</name>
<accession>Q63CC9</accession>
<organism>
    <name type="scientific">Bacillus cereus (strain ZK / E33L)</name>
    <dbReference type="NCBI Taxonomy" id="288681"/>
    <lineage>
        <taxon>Bacteria</taxon>
        <taxon>Bacillati</taxon>
        <taxon>Bacillota</taxon>
        <taxon>Bacilli</taxon>
        <taxon>Bacillales</taxon>
        <taxon>Bacillaceae</taxon>
        <taxon>Bacillus</taxon>
        <taxon>Bacillus cereus group</taxon>
    </lineage>
</organism>
<keyword id="KW-0216">Detoxification</keyword>
<keyword id="KW-0285">Flavoprotein</keyword>
<keyword id="KW-0288">FMN</keyword>
<keyword id="KW-0521">NADP</keyword>
<keyword id="KW-0560">Oxidoreductase</keyword>
<evidence type="ECO:0000255" key="1">
    <source>
        <dbReference type="HAMAP-Rule" id="MF_01614"/>
    </source>
</evidence>
<protein>
    <recommendedName>
        <fullName evidence="1">NADPH dehydrogenase</fullName>
        <ecNumber evidence="1">1.6.99.1</ecNumber>
    </recommendedName>
</protein>
<gene>
    <name evidence="1" type="primary">namA</name>
    <name type="ordered locus">BCE33L1843</name>
</gene>
<reference key="1">
    <citation type="journal article" date="2006" name="J. Bacteriol.">
        <title>Pathogenomic sequence analysis of Bacillus cereus and Bacillus thuringiensis isolates closely related to Bacillus anthracis.</title>
        <authorList>
            <person name="Han C.S."/>
            <person name="Xie G."/>
            <person name="Challacombe J.F."/>
            <person name="Altherr M.R."/>
            <person name="Bhotika S.S."/>
            <person name="Bruce D."/>
            <person name="Campbell C.S."/>
            <person name="Campbell M.L."/>
            <person name="Chen J."/>
            <person name="Chertkov O."/>
            <person name="Cleland C."/>
            <person name="Dimitrijevic M."/>
            <person name="Doggett N.A."/>
            <person name="Fawcett J.J."/>
            <person name="Glavina T."/>
            <person name="Goodwin L.A."/>
            <person name="Hill K.K."/>
            <person name="Hitchcock P."/>
            <person name="Jackson P.J."/>
            <person name="Keim P."/>
            <person name="Kewalramani A.R."/>
            <person name="Longmire J."/>
            <person name="Lucas S."/>
            <person name="Malfatti S."/>
            <person name="McMurry K."/>
            <person name="Meincke L.J."/>
            <person name="Misra M."/>
            <person name="Moseman B.L."/>
            <person name="Mundt M."/>
            <person name="Munk A.C."/>
            <person name="Okinaka R.T."/>
            <person name="Parson-Quintana B."/>
            <person name="Reilly L.P."/>
            <person name="Richardson P."/>
            <person name="Robinson D.L."/>
            <person name="Rubin E."/>
            <person name="Saunders E."/>
            <person name="Tapia R."/>
            <person name="Tesmer J.G."/>
            <person name="Thayer N."/>
            <person name="Thompson L.S."/>
            <person name="Tice H."/>
            <person name="Ticknor L.O."/>
            <person name="Wills P.L."/>
            <person name="Brettin T.S."/>
            <person name="Gilna P."/>
        </authorList>
    </citation>
    <scope>NUCLEOTIDE SEQUENCE [LARGE SCALE GENOMIC DNA]</scope>
    <source>
        <strain>ZK / E33L</strain>
    </source>
</reference>